<reference key="1">
    <citation type="submission" date="2006-12" db="EMBL/GenBank/DDBJ databases">
        <title>Complete sequence of chromosome 1 of Verminephrobacter eiseniae EF01-2.</title>
        <authorList>
            <person name="Copeland A."/>
            <person name="Lucas S."/>
            <person name="Lapidus A."/>
            <person name="Barry K."/>
            <person name="Detter J.C."/>
            <person name="Glavina del Rio T."/>
            <person name="Dalin E."/>
            <person name="Tice H."/>
            <person name="Pitluck S."/>
            <person name="Chertkov O."/>
            <person name="Brettin T."/>
            <person name="Bruce D."/>
            <person name="Han C."/>
            <person name="Tapia R."/>
            <person name="Gilna P."/>
            <person name="Schmutz J."/>
            <person name="Larimer F."/>
            <person name="Land M."/>
            <person name="Hauser L."/>
            <person name="Kyrpides N."/>
            <person name="Kim E."/>
            <person name="Stahl D."/>
            <person name="Richardson P."/>
        </authorList>
    </citation>
    <scope>NUCLEOTIDE SEQUENCE [LARGE SCALE GENOMIC DNA]</scope>
    <source>
        <strain>EF01-2</strain>
    </source>
</reference>
<organism>
    <name type="scientific">Verminephrobacter eiseniae (strain EF01-2)</name>
    <dbReference type="NCBI Taxonomy" id="391735"/>
    <lineage>
        <taxon>Bacteria</taxon>
        <taxon>Pseudomonadati</taxon>
        <taxon>Pseudomonadota</taxon>
        <taxon>Betaproteobacteria</taxon>
        <taxon>Burkholderiales</taxon>
        <taxon>Comamonadaceae</taxon>
        <taxon>Verminephrobacter</taxon>
    </lineage>
</organism>
<evidence type="ECO:0000255" key="1">
    <source>
        <dbReference type="HAMAP-Rule" id="MF_00600"/>
    </source>
</evidence>
<sequence length="552" mass="57446">MAAKEVVFGGEARARMVEGVNILANAVKVTLGPKGRNVVIERSFGAPTVTKDGVSVAKEIELKDKLQNMGAQLVKEVASKTSDNAGDGTTTATVLAQAIVREGFKYVAAGINPMDLKRGIDKAVTALVAELKKASKPTTTSKEIAQVGSISANADETIGKLIADAMDKVGKEGVITVEDGKSLESELDVVEGMQFDRGYLSPYFINNPDKQAALLDNPFVLLFDKKISNIRDLLPTLEQVAKAGRPLLVIAEEVEGEALATLVVNTIRGILKVVAVKAPGFGDRRKAMLEDIAILTGGKVIAEEVGLTLEKVTLADLGQAKRIEVGKENTIIIDGAGAAGDIEARVKQVRVQIEEATSDYDREKLQERVAKLAGGVAVIKVGAATEVEMKEKKARVEDALHATRAAVEEGVVAGGGVAFLRARQAIGGTIKGDNADQDAGIKLVLKAIEAPLREIVNNAGGEASVVVNAVLAGKGNYGFNAANDTYGDMLELGILDPTKVTRTALQNAASVASLLLTTEAMVAEAPKDDAPAGGGGMPGMGGGMGGMGGMDM</sequence>
<comment type="function">
    <text evidence="1">Together with its co-chaperonin GroES, plays an essential role in assisting protein folding. The GroEL-GroES system forms a nano-cage that allows encapsulation of the non-native substrate proteins and provides a physical environment optimized to promote and accelerate protein folding.</text>
</comment>
<comment type="catalytic activity">
    <reaction evidence="1">
        <text>ATP + H2O + a folded polypeptide = ADP + phosphate + an unfolded polypeptide.</text>
        <dbReference type="EC" id="5.6.1.7"/>
    </reaction>
</comment>
<comment type="subunit">
    <text evidence="1">Forms a cylinder of 14 subunits composed of two heptameric rings stacked back-to-back. Interacts with the co-chaperonin GroES.</text>
</comment>
<comment type="subcellular location">
    <subcellularLocation>
        <location evidence="1">Cytoplasm</location>
    </subcellularLocation>
</comment>
<comment type="similarity">
    <text evidence="1">Belongs to the chaperonin (HSP60) family.</text>
</comment>
<keyword id="KW-0067">ATP-binding</keyword>
<keyword id="KW-0143">Chaperone</keyword>
<keyword id="KW-0963">Cytoplasm</keyword>
<keyword id="KW-0413">Isomerase</keyword>
<keyword id="KW-0547">Nucleotide-binding</keyword>
<keyword id="KW-1185">Reference proteome</keyword>
<gene>
    <name evidence="1" type="primary">groEL</name>
    <name evidence="1" type="synonym">groL</name>
    <name type="ordered locus">Veis_2567</name>
</gene>
<proteinExistence type="inferred from homology"/>
<protein>
    <recommendedName>
        <fullName evidence="1">Chaperonin GroEL</fullName>
        <ecNumber evidence="1">5.6.1.7</ecNumber>
    </recommendedName>
    <alternativeName>
        <fullName evidence="1">60 kDa chaperonin</fullName>
    </alternativeName>
    <alternativeName>
        <fullName evidence="1">Chaperonin-60</fullName>
        <shortName evidence="1">Cpn60</shortName>
    </alternativeName>
</protein>
<name>CH60_VEREI</name>
<feature type="chain" id="PRO_1000025846" description="Chaperonin GroEL">
    <location>
        <begin position="1"/>
        <end position="552"/>
    </location>
</feature>
<feature type="binding site" evidence="1">
    <location>
        <begin position="30"/>
        <end position="33"/>
    </location>
    <ligand>
        <name>ATP</name>
        <dbReference type="ChEBI" id="CHEBI:30616"/>
    </ligand>
</feature>
<feature type="binding site" evidence="1">
    <location>
        <position position="51"/>
    </location>
    <ligand>
        <name>ATP</name>
        <dbReference type="ChEBI" id="CHEBI:30616"/>
    </ligand>
</feature>
<feature type="binding site" evidence="1">
    <location>
        <begin position="87"/>
        <end position="91"/>
    </location>
    <ligand>
        <name>ATP</name>
        <dbReference type="ChEBI" id="CHEBI:30616"/>
    </ligand>
</feature>
<feature type="binding site" evidence="1">
    <location>
        <position position="415"/>
    </location>
    <ligand>
        <name>ATP</name>
        <dbReference type="ChEBI" id="CHEBI:30616"/>
    </ligand>
</feature>
<feature type="binding site" evidence="1">
    <location>
        <begin position="480"/>
        <end position="482"/>
    </location>
    <ligand>
        <name>ATP</name>
        <dbReference type="ChEBI" id="CHEBI:30616"/>
    </ligand>
</feature>
<feature type="binding site" evidence="1">
    <location>
        <position position="496"/>
    </location>
    <ligand>
        <name>ATP</name>
        <dbReference type="ChEBI" id="CHEBI:30616"/>
    </ligand>
</feature>
<accession>A1WL05</accession>
<dbReference type="EC" id="5.6.1.7" evidence="1"/>
<dbReference type="EMBL" id="CP000542">
    <property type="protein sequence ID" value="ABM58312.1"/>
    <property type="molecule type" value="Genomic_DNA"/>
</dbReference>
<dbReference type="RefSeq" id="WP_011810313.1">
    <property type="nucleotide sequence ID" value="NC_008786.1"/>
</dbReference>
<dbReference type="SMR" id="A1WL05"/>
<dbReference type="STRING" id="391735.Veis_2567"/>
<dbReference type="GeneID" id="76461095"/>
<dbReference type="KEGG" id="vei:Veis_2567"/>
<dbReference type="eggNOG" id="COG0459">
    <property type="taxonomic scope" value="Bacteria"/>
</dbReference>
<dbReference type="HOGENOM" id="CLU_016503_3_0_4"/>
<dbReference type="OrthoDB" id="9766614at2"/>
<dbReference type="Proteomes" id="UP000000374">
    <property type="component" value="Chromosome"/>
</dbReference>
<dbReference type="GO" id="GO:0005737">
    <property type="term" value="C:cytoplasm"/>
    <property type="evidence" value="ECO:0007669"/>
    <property type="project" value="UniProtKB-SubCell"/>
</dbReference>
<dbReference type="GO" id="GO:0005524">
    <property type="term" value="F:ATP binding"/>
    <property type="evidence" value="ECO:0007669"/>
    <property type="project" value="UniProtKB-UniRule"/>
</dbReference>
<dbReference type="GO" id="GO:0140662">
    <property type="term" value="F:ATP-dependent protein folding chaperone"/>
    <property type="evidence" value="ECO:0007669"/>
    <property type="project" value="InterPro"/>
</dbReference>
<dbReference type="GO" id="GO:0016853">
    <property type="term" value="F:isomerase activity"/>
    <property type="evidence" value="ECO:0007669"/>
    <property type="project" value="UniProtKB-KW"/>
</dbReference>
<dbReference type="GO" id="GO:0051082">
    <property type="term" value="F:unfolded protein binding"/>
    <property type="evidence" value="ECO:0007669"/>
    <property type="project" value="UniProtKB-UniRule"/>
</dbReference>
<dbReference type="GO" id="GO:0042026">
    <property type="term" value="P:protein refolding"/>
    <property type="evidence" value="ECO:0007669"/>
    <property type="project" value="UniProtKB-UniRule"/>
</dbReference>
<dbReference type="CDD" id="cd03344">
    <property type="entry name" value="GroEL"/>
    <property type="match status" value="1"/>
</dbReference>
<dbReference type="FunFam" id="1.10.560.10:FF:000001">
    <property type="entry name" value="60 kDa chaperonin"/>
    <property type="match status" value="1"/>
</dbReference>
<dbReference type="FunFam" id="3.50.7.10:FF:000001">
    <property type="entry name" value="60 kDa chaperonin"/>
    <property type="match status" value="1"/>
</dbReference>
<dbReference type="Gene3D" id="3.50.7.10">
    <property type="entry name" value="GroEL"/>
    <property type="match status" value="1"/>
</dbReference>
<dbReference type="Gene3D" id="1.10.560.10">
    <property type="entry name" value="GroEL-like equatorial domain"/>
    <property type="match status" value="1"/>
</dbReference>
<dbReference type="Gene3D" id="3.30.260.10">
    <property type="entry name" value="TCP-1-like chaperonin intermediate domain"/>
    <property type="match status" value="1"/>
</dbReference>
<dbReference type="HAMAP" id="MF_00600">
    <property type="entry name" value="CH60"/>
    <property type="match status" value="1"/>
</dbReference>
<dbReference type="InterPro" id="IPR018370">
    <property type="entry name" value="Chaperonin_Cpn60_CS"/>
</dbReference>
<dbReference type="InterPro" id="IPR001844">
    <property type="entry name" value="Cpn60/GroEL"/>
</dbReference>
<dbReference type="InterPro" id="IPR002423">
    <property type="entry name" value="Cpn60/GroEL/TCP-1"/>
</dbReference>
<dbReference type="InterPro" id="IPR027409">
    <property type="entry name" value="GroEL-like_apical_dom_sf"/>
</dbReference>
<dbReference type="InterPro" id="IPR027413">
    <property type="entry name" value="GROEL-like_equatorial_sf"/>
</dbReference>
<dbReference type="InterPro" id="IPR027410">
    <property type="entry name" value="TCP-1-like_intermed_sf"/>
</dbReference>
<dbReference type="NCBIfam" id="TIGR02348">
    <property type="entry name" value="GroEL"/>
    <property type="match status" value="1"/>
</dbReference>
<dbReference type="NCBIfam" id="NF000592">
    <property type="entry name" value="PRK00013.1"/>
    <property type="match status" value="1"/>
</dbReference>
<dbReference type="NCBIfam" id="NF009487">
    <property type="entry name" value="PRK12849.1"/>
    <property type="match status" value="1"/>
</dbReference>
<dbReference type="NCBIfam" id="NF009488">
    <property type="entry name" value="PRK12850.1"/>
    <property type="match status" value="1"/>
</dbReference>
<dbReference type="NCBIfam" id="NF009489">
    <property type="entry name" value="PRK12851.1"/>
    <property type="match status" value="1"/>
</dbReference>
<dbReference type="PANTHER" id="PTHR45633">
    <property type="entry name" value="60 KDA HEAT SHOCK PROTEIN, MITOCHONDRIAL"/>
    <property type="match status" value="1"/>
</dbReference>
<dbReference type="Pfam" id="PF00118">
    <property type="entry name" value="Cpn60_TCP1"/>
    <property type="match status" value="1"/>
</dbReference>
<dbReference type="PRINTS" id="PR00298">
    <property type="entry name" value="CHAPERONIN60"/>
</dbReference>
<dbReference type="SUPFAM" id="SSF52029">
    <property type="entry name" value="GroEL apical domain-like"/>
    <property type="match status" value="1"/>
</dbReference>
<dbReference type="SUPFAM" id="SSF48592">
    <property type="entry name" value="GroEL equatorial domain-like"/>
    <property type="match status" value="1"/>
</dbReference>
<dbReference type="SUPFAM" id="SSF54849">
    <property type="entry name" value="GroEL-intermediate domain like"/>
    <property type="match status" value="1"/>
</dbReference>
<dbReference type="PROSITE" id="PS00296">
    <property type="entry name" value="CHAPERONINS_CPN60"/>
    <property type="match status" value="1"/>
</dbReference>